<organism>
    <name type="scientific">Petroselinum crispum</name>
    <name type="common">Parsley</name>
    <name type="synonym">Petroselinum hortense</name>
    <dbReference type="NCBI Taxonomy" id="4043"/>
    <lineage>
        <taxon>Eukaryota</taxon>
        <taxon>Viridiplantae</taxon>
        <taxon>Streptophyta</taxon>
        <taxon>Embryophyta</taxon>
        <taxon>Tracheophyta</taxon>
        <taxon>Spermatophyta</taxon>
        <taxon>Magnoliopsida</taxon>
        <taxon>eudicotyledons</taxon>
        <taxon>Gunneridae</taxon>
        <taxon>Pentapetalae</taxon>
        <taxon>asterids</taxon>
        <taxon>campanulids</taxon>
        <taxon>Apiales</taxon>
        <taxon>Apiaceae</taxon>
        <taxon>Apioideae</taxon>
        <taxon>apioid superclade</taxon>
        <taxon>Apieae</taxon>
        <taxon>Petroselinum</taxon>
    </lineage>
</organism>
<keyword id="KW-0963">Cytoplasm</keyword>
<keyword id="KW-1017">Isopeptide bond</keyword>
<keyword id="KW-0539">Nucleus</keyword>
<keyword id="KW-0677">Repeat</keyword>
<keyword id="KW-0832">Ubl conjugation</keyword>
<accession>P0CH05</accession>
<accession>O82079</accession>
<accession>P03993</accession>
<accession>P69323</accession>
<protein>
    <recommendedName>
        <fullName>Polyubiquitin</fullName>
    </recommendedName>
    <component>
        <recommendedName>
            <fullName>Ubiquitin</fullName>
        </recommendedName>
    </component>
</protein>
<dbReference type="EMBL" id="X64345">
    <property type="protein sequence ID" value="CAA45622.1"/>
    <property type="molecule type" value="Genomic_DNA"/>
</dbReference>
<dbReference type="PIR" id="S30151">
    <property type="entry name" value="S30151"/>
</dbReference>
<dbReference type="SMR" id="P0CH05"/>
<dbReference type="GO" id="GO:0005737">
    <property type="term" value="C:cytoplasm"/>
    <property type="evidence" value="ECO:0007669"/>
    <property type="project" value="UniProtKB-SubCell"/>
</dbReference>
<dbReference type="GO" id="GO:0005634">
    <property type="term" value="C:nucleus"/>
    <property type="evidence" value="ECO:0007669"/>
    <property type="project" value="UniProtKB-SubCell"/>
</dbReference>
<dbReference type="GO" id="GO:0003729">
    <property type="term" value="F:mRNA binding"/>
    <property type="evidence" value="ECO:0007669"/>
    <property type="project" value="UniProtKB-ARBA"/>
</dbReference>
<dbReference type="CDD" id="cd01803">
    <property type="entry name" value="Ubl_ubiquitin"/>
    <property type="match status" value="6"/>
</dbReference>
<dbReference type="FunFam" id="3.10.20.90:FF:000016">
    <property type="entry name" value="Polyubiquitin 3"/>
    <property type="match status" value="6"/>
</dbReference>
<dbReference type="Gene3D" id="3.10.20.90">
    <property type="entry name" value="Phosphatidylinositol 3-kinase Catalytic Subunit, Chain A, domain 1"/>
    <property type="match status" value="6"/>
</dbReference>
<dbReference type="InterPro" id="IPR000626">
    <property type="entry name" value="Ubiquitin-like_dom"/>
</dbReference>
<dbReference type="InterPro" id="IPR029071">
    <property type="entry name" value="Ubiquitin-like_domsf"/>
</dbReference>
<dbReference type="InterPro" id="IPR019954">
    <property type="entry name" value="Ubiquitin_CS"/>
</dbReference>
<dbReference type="InterPro" id="IPR019956">
    <property type="entry name" value="Ubiquitin_dom"/>
</dbReference>
<dbReference type="InterPro" id="IPR050158">
    <property type="entry name" value="Ubiquitin_ubiquitin-like"/>
</dbReference>
<dbReference type="PANTHER" id="PTHR10666">
    <property type="entry name" value="UBIQUITIN"/>
    <property type="match status" value="1"/>
</dbReference>
<dbReference type="Pfam" id="PF00240">
    <property type="entry name" value="ubiquitin"/>
    <property type="match status" value="6"/>
</dbReference>
<dbReference type="PRINTS" id="PR00348">
    <property type="entry name" value="UBIQUITIN"/>
</dbReference>
<dbReference type="SMART" id="SM00213">
    <property type="entry name" value="UBQ"/>
    <property type="match status" value="6"/>
</dbReference>
<dbReference type="SUPFAM" id="SSF54236">
    <property type="entry name" value="Ubiquitin-like"/>
    <property type="match status" value="6"/>
</dbReference>
<dbReference type="PROSITE" id="PS00299">
    <property type="entry name" value="UBIQUITIN_1"/>
    <property type="match status" value="6"/>
</dbReference>
<dbReference type="PROSITE" id="PS50053">
    <property type="entry name" value="UBIQUITIN_2"/>
    <property type="match status" value="6"/>
</dbReference>
<gene>
    <name type="primary">PCUBI4-2</name>
</gene>
<name>UBI2P_PETCR</name>
<proteinExistence type="inferred from homology"/>
<evidence type="ECO:0000250" key="1"/>
<evidence type="ECO:0000255" key="2">
    <source>
        <dbReference type="PROSITE-ProRule" id="PRU00214"/>
    </source>
</evidence>
<evidence type="ECO:0000305" key="3"/>
<comment type="function">
    <text evidence="1">Ubiquitin exists either covalently attached to another protein, or free (unanchored). When covalently bound, it is conjugated to target proteins via an isopeptide bond either as a monomer (monoubiquitin), a polymer linked via different Lys residues of the ubiquitin (polyubiquitin chains) or a linear polymer linked via the initiator Met of the ubiquitin (linear polyubiquitin chains). Polyubiquitin chains, when attached to a target protein, have different functions depending on the Lys residue of the ubiquitin that is linked: Lys-48-linked is involved in protein degradation via the proteasome. Linear polymer chains formed via attachment by the initiator Met lead to cell signaling. Ubiquitin is usually conjugated to Lys residues of target proteins, however, in rare cases, conjugation to Cys or Ser residues has been observed. When polyubiquitin is free (unanchored-polyubiquitin), it also has distinct roles, such as in activation of protein kinases, and in signaling (By similarity).</text>
</comment>
<comment type="subcellular location">
    <subcellularLocation>
        <location evidence="1">Cytoplasm</location>
    </subcellularLocation>
    <subcellularLocation>
        <location evidence="1">Nucleus</location>
    </subcellularLocation>
</comment>
<comment type="miscellaneous">
    <text>For the sake of clarity sequence features are annotated only for the first chain, and are not repeated for each of the following chains.</text>
</comment>
<comment type="similarity">
    <text evidence="3">Belongs to the ubiquitin family.</text>
</comment>
<reference key="1">
    <citation type="journal article" date="1993" name="Plant Mol. Biol.">
        <title>Polyubiquitin gene expression and structural properties of the ubi4-2 gene in Petroselinum crispum.</title>
        <authorList>
            <person name="Kawalleck P."/>
            <person name="Somssich I.E."/>
            <person name="Hahlbrock K."/>
            <person name="Feldbruegge M."/>
            <person name="Weisshaar B."/>
        </authorList>
    </citation>
    <scope>NUCLEOTIDE SEQUENCE [GENOMIC DNA / MRNA]</scope>
</reference>
<sequence>MQIFVKTLTGKTITLEVESSDTIDNVKAKIQDKEGIPPDQQRLIFAGKQLEDGRTLADYNIQKESTLHLVLRLRGGMQIFVKTLTGKTITLEVESSDTIDNVKAKIQDKEGIPPDQQRLIFAGKQLEDGRTLADYNIQKESTLHLVLRLRGGMQIFVKTLTGKTITLEVESSDTIDNVKAKIQDKEGIPPDQQRLIFAGKQLEDGRTLADYNIQKESTLHLVLRLRGGMQIFVKTLTGKTITLEVESSDTIDNVKAKIQDKEGIPPDQQRLIFAGKQLEDGRTLADYNIQKESTLHLVLRLRGGMQIFVKTLTGKTITLEVESSDTIDNVKAKIQDKEGIPPDQQRLIFAGKQLEDGRTLADYNIQKESTLHLVLRLRGGMQIFVKTLTGKTITLEVESSDTIDNVKAKIQDKEGIPPDQQRLIFAGKQLEDGRTLADYNIQKESTLHLVLRLRGGDF</sequence>
<feature type="chain" id="PRO_0000396521" description="Ubiquitin">
    <location>
        <begin position="1"/>
        <end position="76"/>
    </location>
</feature>
<feature type="chain" id="PRO_0000396419" description="Ubiquitin">
    <location>
        <begin position="77"/>
        <end position="152"/>
    </location>
</feature>
<feature type="chain" id="PRO_0000396420" description="Ubiquitin">
    <location>
        <begin position="153"/>
        <end position="228"/>
    </location>
</feature>
<feature type="chain" id="PRO_0000396421" description="Ubiquitin">
    <location>
        <begin position="229"/>
        <end position="304"/>
    </location>
</feature>
<feature type="chain" id="PRO_0000396422" description="Ubiquitin">
    <location>
        <begin position="305"/>
        <end position="380"/>
    </location>
</feature>
<feature type="chain" id="PRO_0000396423" description="Ubiquitin">
    <location>
        <begin position="381"/>
        <end position="456"/>
    </location>
</feature>
<feature type="propeptide" id="PRO_0000396424">
    <location>
        <begin position="457"/>
        <end position="458"/>
    </location>
</feature>
<feature type="domain" description="Ubiquitin-like 1" evidence="2">
    <location>
        <begin position="1"/>
        <end position="76"/>
    </location>
</feature>
<feature type="domain" description="Ubiquitin-like 2" evidence="2">
    <location>
        <begin position="77"/>
        <end position="152"/>
    </location>
</feature>
<feature type="domain" description="Ubiquitin-like 3" evidence="2">
    <location>
        <begin position="153"/>
        <end position="228"/>
    </location>
</feature>
<feature type="domain" description="Ubiquitin-like 4" evidence="2">
    <location>
        <begin position="229"/>
        <end position="304"/>
    </location>
</feature>
<feature type="domain" description="Ubiquitin-like 5" evidence="2">
    <location>
        <begin position="305"/>
        <end position="380"/>
    </location>
</feature>
<feature type="domain" description="Ubiquitin-like 6" evidence="2">
    <location>
        <begin position="381"/>
        <end position="456"/>
    </location>
</feature>
<feature type="cross-link" description="Glycyl lysine isopeptide (Lys-Gly) (interchain with G-Cter in ubiquitin)" evidence="1">
    <location>
        <position position="48"/>
    </location>
</feature>
<feature type="cross-link" description="Glycyl lysine isopeptide (Gly-Lys) (interchain with K-? in acceptor proteins)" evidence="2">
    <location>
        <position position="76"/>
    </location>
</feature>